<gene>
    <name evidence="1" type="primary">flgI</name>
    <name type="ordered locus">Swoo_1604</name>
</gene>
<name>FLGI_SHEWM</name>
<organism>
    <name type="scientific">Shewanella woodyi (strain ATCC 51908 / MS32)</name>
    <dbReference type="NCBI Taxonomy" id="392500"/>
    <lineage>
        <taxon>Bacteria</taxon>
        <taxon>Pseudomonadati</taxon>
        <taxon>Pseudomonadota</taxon>
        <taxon>Gammaproteobacteria</taxon>
        <taxon>Alteromonadales</taxon>
        <taxon>Shewanellaceae</taxon>
        <taxon>Shewanella</taxon>
    </lineage>
</organism>
<protein>
    <recommendedName>
        <fullName evidence="1">Flagellar P-ring protein</fullName>
    </recommendedName>
    <alternativeName>
        <fullName evidence="1">Basal body P-ring protein</fullName>
    </alternativeName>
</protein>
<reference key="1">
    <citation type="submission" date="2008-02" db="EMBL/GenBank/DDBJ databases">
        <title>Complete sequence of Shewanella woodyi ATCC 51908.</title>
        <authorList>
            <consortium name="US DOE Joint Genome Institute"/>
            <person name="Copeland A."/>
            <person name="Lucas S."/>
            <person name="Lapidus A."/>
            <person name="Glavina del Rio T."/>
            <person name="Dalin E."/>
            <person name="Tice H."/>
            <person name="Bruce D."/>
            <person name="Goodwin L."/>
            <person name="Pitluck S."/>
            <person name="Sims D."/>
            <person name="Brettin T."/>
            <person name="Detter J.C."/>
            <person name="Han C."/>
            <person name="Kuske C.R."/>
            <person name="Schmutz J."/>
            <person name="Larimer F."/>
            <person name="Land M."/>
            <person name="Hauser L."/>
            <person name="Kyrpides N."/>
            <person name="Lykidis A."/>
            <person name="Zhao J.-S."/>
            <person name="Richardson P."/>
        </authorList>
    </citation>
    <scope>NUCLEOTIDE SEQUENCE [LARGE SCALE GENOMIC DNA]</scope>
    <source>
        <strain>ATCC 51908 / MS32</strain>
    </source>
</reference>
<proteinExistence type="inferred from homology"/>
<comment type="function">
    <text evidence="1">Assembles around the rod to form the L-ring and probably protects the motor/basal body from shearing forces during rotation.</text>
</comment>
<comment type="subunit">
    <text evidence="1">The basal body constitutes a major portion of the flagellar organelle and consists of four rings (L,P,S, and M) mounted on a central rod.</text>
</comment>
<comment type="subcellular location">
    <subcellularLocation>
        <location evidence="1">Periplasm</location>
    </subcellularLocation>
    <subcellularLocation>
        <location evidence="1">Bacterial flagellum basal body</location>
    </subcellularLocation>
</comment>
<comment type="similarity">
    <text evidence="1">Belongs to the FlgI family.</text>
</comment>
<dbReference type="EMBL" id="CP000961">
    <property type="protein sequence ID" value="ACA85890.1"/>
    <property type="molecule type" value="Genomic_DNA"/>
</dbReference>
<dbReference type="RefSeq" id="WP_012324236.1">
    <property type="nucleotide sequence ID" value="NC_010506.1"/>
</dbReference>
<dbReference type="SMR" id="B1KLG5"/>
<dbReference type="STRING" id="392500.Swoo_1604"/>
<dbReference type="KEGG" id="swd:Swoo_1604"/>
<dbReference type="eggNOG" id="COG1706">
    <property type="taxonomic scope" value="Bacteria"/>
</dbReference>
<dbReference type="HOGENOM" id="CLU_045235_1_0_6"/>
<dbReference type="Proteomes" id="UP000002168">
    <property type="component" value="Chromosome"/>
</dbReference>
<dbReference type="GO" id="GO:0009428">
    <property type="term" value="C:bacterial-type flagellum basal body, distal rod, P ring"/>
    <property type="evidence" value="ECO:0007669"/>
    <property type="project" value="InterPro"/>
</dbReference>
<dbReference type="GO" id="GO:0030288">
    <property type="term" value="C:outer membrane-bounded periplasmic space"/>
    <property type="evidence" value="ECO:0007669"/>
    <property type="project" value="InterPro"/>
</dbReference>
<dbReference type="GO" id="GO:0005198">
    <property type="term" value="F:structural molecule activity"/>
    <property type="evidence" value="ECO:0007669"/>
    <property type="project" value="InterPro"/>
</dbReference>
<dbReference type="GO" id="GO:0071973">
    <property type="term" value="P:bacterial-type flagellum-dependent cell motility"/>
    <property type="evidence" value="ECO:0007669"/>
    <property type="project" value="InterPro"/>
</dbReference>
<dbReference type="HAMAP" id="MF_00416">
    <property type="entry name" value="FlgI"/>
    <property type="match status" value="1"/>
</dbReference>
<dbReference type="InterPro" id="IPR001782">
    <property type="entry name" value="Flag_FlgI"/>
</dbReference>
<dbReference type="NCBIfam" id="NF003676">
    <property type="entry name" value="PRK05303.1"/>
    <property type="match status" value="1"/>
</dbReference>
<dbReference type="PANTHER" id="PTHR30381">
    <property type="entry name" value="FLAGELLAR P-RING PERIPLASMIC PROTEIN FLGI"/>
    <property type="match status" value="1"/>
</dbReference>
<dbReference type="PANTHER" id="PTHR30381:SF0">
    <property type="entry name" value="FLAGELLAR P-RING PROTEIN"/>
    <property type="match status" value="1"/>
</dbReference>
<dbReference type="Pfam" id="PF02119">
    <property type="entry name" value="FlgI"/>
    <property type="match status" value="1"/>
</dbReference>
<dbReference type="PRINTS" id="PR01010">
    <property type="entry name" value="FLGPRINGFLGI"/>
</dbReference>
<sequence length="363" mass="38158">MKLKLFLLSVLLLVSGSSQAQRIKDIANVQGVRSNQLIGYGLVVGLPGTGEKTTYTEQTFKTMLKNFGINLPDNLRPKIKNVAVVAVHAEMPAFIKPGQTLDVTVSSLGEAKSLRGGTLLQTFLKGVDGNVYAIAQGSMVVSGFSAEGLDGSKVIQNTPTVGRIPNGGIVERTVTTPFSTGDHLTFNLRRADFSTAKRLADAINELLGPGMARPLDAASVQVSAPRDVSQRVSFLATLENIQVEPASESAKVIVNSRTGTIVVGREVRLLPAAVTHGGLTVTIAEATQVSQPNPLAGGQTVVTADTTIDVAEEDSRMFLFNPGTTLDELVRAVNLVGAAPSDVLAILEALKMAGALHGELIII</sequence>
<feature type="signal peptide" evidence="1">
    <location>
        <begin position="1"/>
        <end position="20"/>
    </location>
</feature>
<feature type="chain" id="PRO_5000317095" description="Flagellar P-ring protein">
    <location>
        <begin position="21"/>
        <end position="363"/>
    </location>
</feature>
<evidence type="ECO:0000255" key="1">
    <source>
        <dbReference type="HAMAP-Rule" id="MF_00416"/>
    </source>
</evidence>
<keyword id="KW-0975">Bacterial flagellum</keyword>
<keyword id="KW-0574">Periplasm</keyword>
<keyword id="KW-1185">Reference proteome</keyword>
<keyword id="KW-0732">Signal</keyword>
<accession>B1KLG5</accession>